<name>SOSSC_SALSA</name>
<sequence length="107" mass="11596">MASPAPGAGFQNKNRVAILAELDKEKRRLIQNSSMNNPGASIPLSRPALNKDFRDHAEQQHIAAQQKAALQHAHAHSSGFFITQDSSFGNLILPVLPRLDPPPPAES</sequence>
<comment type="function">
    <text evidence="1">Component of the SOSS complex, a multiprotein complex that functions downstream of the MRN complex to promote DNA repair and G2/M checkpoint. The SOSS complex associates with single-stranded DNA at DNA lesions and influences diverse endpoints in the cellular DNA damage response including cell-cycle checkpoint activation, recombinational repair and maintenance of genomic stability. Required for efficient homologous recombination-dependent repair of double-strand breaks (DSBs) (By similarity).</text>
</comment>
<comment type="subunit">
    <text evidence="1">Belongs to the multiprotein complex Integrator. Component of the SOSS complex, composed of soss-b (soss-b1/nabp2 or soss-b2/nabp1), soss-a/ints3 and soss-c/inip (By similarity).</text>
</comment>
<comment type="subcellular location">
    <subcellularLocation>
        <location evidence="1">Nucleus</location>
    </subcellularLocation>
    <text evidence="1">Localizes to nuclear foci following DNA damage.</text>
</comment>
<comment type="similarity">
    <text evidence="2">Belongs to the SOSS-C family.</text>
</comment>
<evidence type="ECO:0000250" key="1"/>
<evidence type="ECO:0000305" key="2"/>
<gene>
    <name type="primary">inip</name>
    <name type="synonym">ssbip1</name>
</gene>
<protein>
    <recommendedName>
        <fullName>SOSS complex subunit C</fullName>
    </recommendedName>
    <alternativeName>
        <fullName>INTS3- and NABP-interacting protein</fullName>
    </alternativeName>
    <alternativeName>
        <fullName>Sensor of single-strand DNA complex subunit C</fullName>
    </alternativeName>
    <alternativeName>
        <fullName>Sensor of ssDNA subunit C</fullName>
        <shortName>SOSS-C</shortName>
    </alternativeName>
    <alternativeName>
        <fullName>Single-stranded DNA-binding protein-interacting protein 1</fullName>
        <shortName>SSB-interacting protein 1</shortName>
    </alternativeName>
</protein>
<feature type="chain" id="PRO_0000385317" description="SOSS complex subunit C">
    <location>
        <begin position="1"/>
        <end position="107"/>
    </location>
</feature>
<organism>
    <name type="scientific">Salmo salar</name>
    <name type="common">Atlantic salmon</name>
    <dbReference type="NCBI Taxonomy" id="8030"/>
    <lineage>
        <taxon>Eukaryota</taxon>
        <taxon>Metazoa</taxon>
        <taxon>Chordata</taxon>
        <taxon>Craniata</taxon>
        <taxon>Vertebrata</taxon>
        <taxon>Euteleostomi</taxon>
        <taxon>Actinopterygii</taxon>
        <taxon>Neopterygii</taxon>
        <taxon>Teleostei</taxon>
        <taxon>Protacanthopterygii</taxon>
        <taxon>Salmoniformes</taxon>
        <taxon>Salmonidae</taxon>
        <taxon>Salmoninae</taxon>
        <taxon>Salmo</taxon>
    </lineage>
</organism>
<reference key="1">
    <citation type="journal article" date="2010" name="BMC Genomics">
        <title>Salmo salar and Esox lucius full-length cDNA sequences reveal changes in evolutionary pressures on a post-tetraploidization genome.</title>
        <authorList>
            <person name="Leong J.S."/>
            <person name="Jantzen S.G."/>
            <person name="von Schalburg K.R."/>
            <person name="Cooper G.A."/>
            <person name="Messmer A.M."/>
            <person name="Liao N.Y."/>
            <person name="Munro S."/>
            <person name="Moore R."/>
            <person name="Holt R.A."/>
            <person name="Jones S.J."/>
            <person name="Davidson W.S."/>
            <person name="Koop B.F."/>
        </authorList>
    </citation>
    <scope>NUCLEOTIDE SEQUENCE [LARGE SCALE MRNA]</scope>
    <source>
        <tissue>Thymus</tissue>
    </source>
</reference>
<proteinExistence type="inferred from homology"/>
<dbReference type="EMBL" id="BT057755">
    <property type="protein sequence ID" value="ACM09627.1"/>
    <property type="molecule type" value="mRNA"/>
</dbReference>
<dbReference type="RefSeq" id="NP_001140092.1">
    <property type="nucleotide sequence ID" value="NM_001146620.1"/>
</dbReference>
<dbReference type="RefSeq" id="XP_014002857.1">
    <property type="nucleotide sequence ID" value="XM_014147382.2"/>
</dbReference>
<dbReference type="RefSeq" id="XP_014002866.1">
    <property type="nucleotide sequence ID" value="XM_014147391.2"/>
</dbReference>
<dbReference type="SMR" id="B9EQ30"/>
<dbReference type="STRING" id="8030.ENSSSAP00000047928"/>
<dbReference type="PaxDb" id="8030-ENSSSAP00000047928"/>
<dbReference type="Ensembl" id="ENSSSAT00020061321">
    <property type="protein sequence ID" value="ENSSSAP00020048134"/>
    <property type="gene ID" value="ENSSSAG00020026480"/>
</dbReference>
<dbReference type="Ensembl" id="ENSSSAT00070000072">
    <property type="protein sequence ID" value="ENSSSAP00070000072"/>
    <property type="gene ID" value="ENSSSAG00070000047"/>
</dbReference>
<dbReference type="GeneID" id="100286680"/>
<dbReference type="KEGG" id="sasa:100286680"/>
<dbReference type="CTD" id="58493"/>
<dbReference type="Proteomes" id="UP000087266">
    <property type="component" value="Chromosome ssa01"/>
</dbReference>
<dbReference type="Bgee" id="ENSSSAG00000048571">
    <property type="expression patterns" value="Expressed in ovary and 24 other cell types or tissues"/>
</dbReference>
<dbReference type="GO" id="GO:0005654">
    <property type="term" value="C:nucleoplasm"/>
    <property type="evidence" value="ECO:0007669"/>
    <property type="project" value="TreeGrafter"/>
</dbReference>
<dbReference type="GO" id="GO:0005634">
    <property type="term" value="C:nucleus"/>
    <property type="evidence" value="ECO:0000250"/>
    <property type="project" value="UniProtKB"/>
</dbReference>
<dbReference type="GO" id="GO:0070876">
    <property type="term" value="C:SOSS complex"/>
    <property type="evidence" value="ECO:0000250"/>
    <property type="project" value="UniProtKB"/>
</dbReference>
<dbReference type="GO" id="GO:0006974">
    <property type="term" value="P:DNA damage response"/>
    <property type="evidence" value="ECO:0000250"/>
    <property type="project" value="UniProtKB"/>
</dbReference>
<dbReference type="GO" id="GO:0006281">
    <property type="term" value="P:DNA repair"/>
    <property type="evidence" value="ECO:0000250"/>
    <property type="project" value="UniProtKB"/>
</dbReference>
<dbReference type="GO" id="GO:0010212">
    <property type="term" value="P:response to ionizing radiation"/>
    <property type="evidence" value="ECO:0000250"/>
    <property type="project" value="UniProtKB"/>
</dbReference>
<dbReference type="InterPro" id="IPR031821">
    <property type="entry name" value="SOSSC"/>
</dbReference>
<dbReference type="PANTHER" id="PTHR31526">
    <property type="entry name" value="SOSS COMPLEX SUBUNIT C"/>
    <property type="match status" value="1"/>
</dbReference>
<dbReference type="PANTHER" id="PTHR31526:SF2">
    <property type="entry name" value="SOSS COMPLEX SUBUNIT C"/>
    <property type="match status" value="1"/>
</dbReference>
<dbReference type="Pfam" id="PF15925">
    <property type="entry name" value="SOSSC"/>
    <property type="match status" value="1"/>
</dbReference>
<keyword id="KW-0227">DNA damage</keyword>
<keyword id="KW-0234">DNA repair</keyword>
<keyword id="KW-0539">Nucleus</keyword>
<keyword id="KW-1185">Reference proteome</keyword>
<accession>B9EQ30</accession>